<reference key="1">
    <citation type="journal article" date="1999" name="Dev. Biol.">
        <title>Neurestin: putative transmembrane molecule implicated in neuronal development.</title>
        <authorList>
            <person name="Otaki J.M."/>
            <person name="Firestein S."/>
        </authorList>
    </citation>
    <scope>NUCLEOTIDE SEQUENCE [MRNA] (ISOFORM 2)</scope>
    <scope>NUCLEOTIDE SEQUENCE [MRNA] OF 575-911 (ISOFORM 3)</scope>
    <scope>NUCLEOTIDE SEQUENCE [MRNA] OF 575-911 (ISOFORM 4)</scope>
    <scope>NUCLEOTIDE SEQUENCE [MRNA] OF 575-911 (ISOFORM 1)</scope>
    <scope>DEVELOPMENTAL STAGE</scope>
    <source>
        <strain>Sprague-Dawley</strain>
        <tissue>Olfactory bulb</tissue>
    </source>
</reference>
<reference key="2">
    <citation type="journal article" date="2011" name="Proc. Natl. Acad. Sci. U.S.A.">
        <title>Latrophilin 1 and its endogenous ligand Lasso/teneurin-2 form a high-affinity transsynaptic receptor pair with signaling capabilities.</title>
        <authorList>
            <person name="Silva J.P."/>
            <person name="Lelianova V.G."/>
            <person name="Ermolyuk Y.S."/>
            <person name="Vysokov N."/>
            <person name="Hitchen P.G."/>
            <person name="Berninghausen O."/>
            <person name="Rahman M.A."/>
            <person name="Zangrandi A."/>
            <person name="Fidalgo S."/>
            <person name="Tonevitsky A.G."/>
            <person name="Dell A."/>
            <person name="Volynski K.E."/>
            <person name="Ushkaryov Y.A."/>
        </authorList>
    </citation>
    <scope>FUNCTION AS ADGRL1 LIGAND</scope>
    <scope>SUBCELLULAR LOCATION</scope>
    <scope>TISSUE SPECIFICITY</scope>
    <scope>IDENTIFICATION BY MASS SPECTROMETRY</scope>
</reference>
<reference key="3">
    <citation type="journal article" date="2012" name="Nat. Commun.">
        <title>Quantitative maps of protein phosphorylation sites across 14 different rat organs and tissues.</title>
        <authorList>
            <person name="Lundby A."/>
            <person name="Secher A."/>
            <person name="Lage K."/>
            <person name="Nordsborg N.B."/>
            <person name="Dmytriyev A."/>
            <person name="Lundby C."/>
            <person name="Olsen J.V."/>
        </authorList>
    </citation>
    <scope>PHOSPHORYLATION [LARGE SCALE ANALYSIS] AT THR-155 AND SER-157</scope>
    <scope>IDENTIFICATION BY MASS SPECTROMETRY [LARGE SCALE ANALYSIS]</scope>
</reference>
<proteinExistence type="evidence at protein level"/>
<sequence>MDVKDRRHRSLTRGRCGKECRYTSSSLDSEDCRVPTQKSYSSSETLKAYDHDSRMHYGNRVTDLVHRESDEFSRQGANFTLAELGICEPSPHRSGYCSDMGILHQGYSLSTGSDADSDTEGGMSPEHAIRLWGRGIKSRRSSGLSSRENSALTLTDSDNENKSDDDNGRPIPPTSSSSLLPSAQLPSSHNPPPVSCQMPLLDSNTSHQIMDTNPDEEFSPNSYLLRACSGPQQASSSGPPNHHSQSTLRPPLPPPHNHTLSHHHSSANSLNRNSLTNRRSQIHAPAPAPNDLATTPESVQLQDSWVLNSNVPLETRHFLFKTSSGSTPLFSSSSPGYPLTSGTVYTPPPRLLPRNTFSRKAFKLKKPSKYCSWKCAALSAIAAALLLAILLAYFIAMHLLGLNWQLQPADGHTFNNGVRTGLPGNDDVATVPSGGKVPWSLKNSSIDSGEAEVGRRVTQEVPPGVFWRSQIHISQPQFLKFNISLGKDALFGVYIRRGLPPSHAQYDFMERLDGKEKWSVVESPRERRSIQTLVQNEAVFVQYLDVGLWHLAFYNDGKDKEMVSFNTVVLDSVQDCPRNCHGNGECVSGLCHCFPGFLGADCAKAACPVLCSGNGQYSKGTCQCYSGWKGAECDVPMNQCIDPSCGGHGSCIDGNCVCAAGYKGEHCEEVDCLDPTCSSHGVCVNGECLCSPGWGGLNCELARVQCPDQCSGHGTYLPDSGLCNCDPNWMGPDCSVEVCSVDCGTHGVCIGGACRCEEGWTGAACDQRVCHPRCIEHGTCKDGKCECREGWNGEHCTIGRQTAGTETDGCPDLCNGNGRCTLGQNSWQCVCQTGWRGPGCNVAMETSCADNKDNEGDGLVDCLDPDCCLQSACQNSLLCRGSRDPLDIIQQGQTDWPAVKSFYDRIKLLAGKDSTHIIPGDNPFNSSLVSLIRGQVVTTDGTPLVGVNVSFVKYPKYGYTITRQDGTFDLIANGGSALTLHFERAPFMSRERTVWPPWNSFYAMDTLVMKTEENSIPSCDLSGFVRPDPIIISSPLSTFFSASPAANPIVPETQVLHEEIELPGTNVKLRYLSSRTAGYKSLLKITMTQSTVPLNLIRVHLMVAVEGHLFQKSFQASPNLAYTFIWDKTDAYGQRVYGLSDAVVSVGFEYETCPSLILWEKRTALLQGFELDPSNLGGWSLDKHHTLNVKSGILLKGTGENQFLTQQPAIITSIMGNGRRRSISCPSCNGLAEGNKLLAPVALAVGIDGSLFVGDFNYIRRIFPSRNVTSILELRNKEFKHSNSPGHKYYLAVDPVTGSLYVSDTNSRRIYRVKSLSGAKDLAGNSEVVAGTGEQCLPFDEARCGDGGKAVDATLMSPRGIAVDKNGLMYFVDATMIRKVDQNGIISTLLGSNDLTAVRPLSCDSSMDVAQVRLEWPTDLAVNPMDNSLYVLENNVILRITENHQVSIIAGRPMHCQVPGIDYSLSKLAIHSALESASAIAISHTGVLYITETDEKKINRLRQVTTNGEICLLAGAASDCDCKNDVNCICYSGDDAYATDAILNSPSSLAVAPDGTIYIADLGNIRIRAVSKNKPVLNAFNQYEAASPGEQELYVFNADGIHQYTVSLVTGEYLYNFTYSADNDVTELIDNNGNSLKIRRDSSGMPRHLLMPDNQIITLTVGTNGGLKAVSTQNLELGLMTYDGNTGLLATKSDETGWTTFYDYDHEGRLTNVTRPTGVVTSLHREMEKSITVDIENSNRDNDVTVITNLSSVEASYTVVQDQVRNSYQLCSNGTLRVMYANGMGVSFHSEPHVLAGTLTPTIGRCNISLPMENGLNSIEWRLRKEQIKGKVTIFGRKLRVHGRNLLSIDYDRNIRTEKIYDDHRKFTLRIIYDQVGRPFLWLPSSGLAAVNVSYFFNGRLAGLQRGAMSERTDIDKQGRIVSRMFADGKVWSYSYLDKSMVLLLQSQRQYIFEYDSSDRLHAVTMPSVARHSMSTHTSIGYIRNIYNPPESNASVIFDYSDDGRILKTSFLGTGRQVFYKYGKLSKLSEIVYDSTAVTFGYDETTGVLKMVNLQSGGFSCTIRYRKVGPLVDKQIYRFSEEGMINARFDYTYHDNSFRIASIKPVISETPLPVDLYRYDEISGKVEHFGKFGVIYYDINQIITTAVMTLSKHFDTHGRIKEVQYEMFRSLMYWMTVQYDSMGRVIKRELKLGPYANTTKYTYDYDGDGQLQSVAVNDRPTWRYSYDLNGNLHLLNPGNSARLMPLRYDLRDRITRLGDVQYKIDDDGYLCQRGSDIFEYNSKGLLTRAYNKASGWSVQYRYDGVSRRASYKTNLGHHLQYFYSDLHHPTRITHVYNHSNSEITSLYYDLQGHLFAMESSSGEEYYVASDNTGTPLAVFSINGLMIKQLQYTAYGEIYYDSNPDFQMVIGFHGGLYDPLTKLVHFTQRDYDVLAGRWTSPDYTMWRNVGKEPAPFNLYMFKNNNPLSNELDLKNYVTDVKSWLVMFGFQLSNIIPGFPRAKMYFVPPPYELSESQASENGQLITGVQQTTERHNQAFLALEGQVISKKLHAGIREKAGHWFATTTPIIGKGIMFAIKEGRVTTGVSSIASEDSRKVASVLNNAYYLDKMHYSIEGKDTHYFVKIGAADGDLVTLGTTIGRKVLESGVNVTVSQPTLLVNGRTRRFTNIEFQYSTLLLSIRYGLTPDTLDEEKARVLDQARQRALGTAWAKEQQKARDGREGSRLWTEGEKQQLLSTGRVQGYEGYYVLPVEQYPELADSSSNIQFLRQNEMGKR</sequence>
<comment type="function">
    <text evidence="4 11">Involved in neural development, regulating the establishment of proper connectivity within the nervous system (PubMed:21724987). Acts as a ligand of the ADGRL1 and ADGRL3 receptors that are expressed at the surface of adjacent cells (By similarity). Promotes the formation of filopodia and enlarged growth cone in neuronal cells (By similarity). Mediates axon guidance and homophilic and heterophilic cell-cell adhesion (PubMed:21724987). May function as a cellular signal transducer (By similarity).</text>
</comment>
<comment type="function">
    <molecule>Ten-2 intracellular domain</molecule>
    <text evidence="3">Induces gene transcription inhibition.</text>
</comment>
<comment type="subunit">
    <text evidence="1 13">Homodimer; disulfide-linked (Probable). Heterodimer with either TENM1 or TENM3. May also form heterodimer with TENM4 (By similarity). Interacts with ADGRL1 isoform 2.</text>
</comment>
<comment type="subcellular location">
    <subcellularLocation>
        <location evidence="11">Cell membrane</location>
        <topology evidence="6">Single-pass membrane protein</topology>
    </subcellularLocation>
    <subcellularLocation>
        <location evidence="5">Presynaptic cell membrane</location>
        <topology evidence="6">Single-pass membrane protein</topology>
    </subcellularLocation>
    <subcellularLocation>
        <location evidence="11">Postsynaptic cell membrane</location>
        <topology evidence="6">Single-pass membrane protein</topology>
    </subcellularLocation>
    <subcellularLocation>
        <location evidence="3">Endoplasmic reticulum</location>
    </subcellularLocation>
    <subcellularLocation>
        <location evidence="3">Golgi apparatus</location>
    </subcellularLocation>
    <subcellularLocation>
        <location evidence="11">Synapse</location>
    </subcellularLocation>
    <subcellularLocation>
        <location evidence="11">Cell projection</location>
        <location evidence="11">Dendritic spine</location>
    </subcellularLocation>
    <subcellularLocation>
        <location evidence="3">Cell projection</location>
        <location evidence="3">Filopodium</location>
    </subcellularLocation>
    <subcellularLocation>
        <location evidence="3">Cell projection</location>
        <location evidence="3">Growth cone</location>
    </subcellularLocation>
</comment>
<comment type="subcellular location">
    <molecule>Ten-2 intracellular domain</molecule>
    <subcellularLocation>
        <location evidence="3">Nucleus</location>
        <location evidence="3">PML body</location>
    </subcellularLocation>
</comment>
<comment type="alternative products">
    <event type="alternative splicing"/>
    <isoform>
        <id>Q9R1K2-1</id>
        <name>1</name>
        <name>Gamma</name>
        <sequence type="displayed"/>
    </isoform>
    <isoform>
        <id>Q9R1K2-2</id>
        <name>2</name>
        <name>Alpha</name>
        <sequence type="described" ref="VSP_021396"/>
    </isoform>
    <isoform>
        <id>Q9R1K2-3</id>
        <name>3</name>
        <name>Delta</name>
        <sequence type="described" ref="VSP_021395"/>
    </isoform>
    <isoform>
        <id>Q9R1K2-4</id>
        <name>4</name>
        <name>Beta</name>
        <sequence type="described" ref="VSP_021397"/>
    </isoform>
</comment>
<comment type="tissue specificity">
    <text evidence="11">Expressed in the brain (at protein level).</text>
</comment>
<comment type="developmental stage">
    <text evidence="10">From 17 dpc to 18 dpc embryos, a very strong signal appeared and continued throughout the remaining prenatal days. The signal was strongest in the cerebral cortex (including the cingulate cortex, neocortex, and orbital and insular area), thalamus (anterior and intermediate thalamus), and weak in posterior thalamus and midbrain.</text>
</comment>
<comment type="domain">
    <text>EGF-like domains 2 and 5 which have an odd number of cysteines might enable the formation of intermolecular disulfide bonds.</text>
</comment>
<comment type="domain">
    <text>Cytoplasmic proline-rich regions could serve as docking domains for intracellular SH3-containing proteins.</text>
</comment>
<comment type="PTM">
    <molecule>Ten-2, soluble form</molecule>
    <text evidence="3">Derives from the membrane form by proteolytic processing.</text>
</comment>
<comment type="PTM">
    <molecule>Ten-2 intracellular domain</molecule>
    <text evidence="3">Derives from the plasma membrane form by proteolytic cleavage and translocates to the nucleus. Homophilic binding of the C-terminal extracellular domain stimulates its proteolytic cleavage and release in the cytoplasmic. Is subjected to rapid degradation by the proteasome pathway (By similarity).</text>
</comment>
<comment type="similarity">
    <text evidence="13">Belongs to the tenascin family. Teneurin subfamily.</text>
</comment>
<feature type="chain" id="PRO_0000259503" description="Teneurin-2">
    <location>
        <begin position="1"/>
        <end position="2774"/>
    </location>
</feature>
<feature type="chain" id="PRO_0000421015" description="Ten-2 intracellular domain" evidence="1">
    <location>
        <begin position="1"/>
        <end status="unknown"/>
    </location>
</feature>
<feature type="chain" id="PRO_0000421016" description="Ten-2, soluble form" evidence="1">
    <location>
        <begin position="529"/>
        <end position="2774"/>
    </location>
</feature>
<feature type="topological domain" description="Cytoplasmic" evidence="6">
    <location>
        <begin position="1"/>
        <end position="379"/>
    </location>
</feature>
<feature type="transmembrane region" description="Helical" evidence="6">
    <location>
        <begin position="380"/>
        <end position="400"/>
    </location>
</feature>
<feature type="topological domain" description="Extracellular" evidence="6">
    <location>
        <begin position="401"/>
        <end position="2774"/>
    </location>
</feature>
<feature type="domain" description="Teneurin N-terminal" evidence="8">
    <location>
        <begin position="1"/>
        <end position="375"/>
    </location>
</feature>
<feature type="domain" description="EGF-like 1" evidence="7">
    <location>
        <begin position="575"/>
        <end position="603"/>
    </location>
</feature>
<feature type="domain" description="EGF-like 2" evidence="7">
    <location>
        <begin position="605"/>
        <end position="634"/>
    </location>
</feature>
<feature type="domain" description="EGF-like 3" evidence="7">
    <location>
        <begin position="636"/>
        <end position="668"/>
    </location>
</feature>
<feature type="domain" description="EGF-like 4" evidence="7">
    <location>
        <begin position="669"/>
        <end position="701"/>
    </location>
</feature>
<feature type="domain" description="EGF-like 5" evidence="7">
    <location>
        <begin position="702"/>
        <end position="735"/>
    </location>
</feature>
<feature type="domain" description="EGF-like 6" evidence="7">
    <location>
        <begin position="738"/>
        <end position="766"/>
    </location>
</feature>
<feature type="domain" description="EGF-like 7" evidence="7">
    <location>
        <begin position="769"/>
        <end position="797"/>
    </location>
</feature>
<feature type="domain" description="EGF-like 8" evidence="7">
    <location>
        <begin position="808"/>
        <end position="841"/>
    </location>
</feature>
<feature type="repeat" description="NHL 1">
    <location>
        <begin position="1272"/>
        <end position="1316"/>
    </location>
</feature>
<feature type="repeat" description="NHL 2">
    <location>
        <begin position="1342"/>
        <end position="1386"/>
    </location>
</feature>
<feature type="repeat" description="NHL 3">
    <location>
        <begin position="1401"/>
        <end position="1452"/>
    </location>
</feature>
<feature type="repeat" description="NHL 4">
    <location>
        <begin position="1474"/>
        <end position="1501"/>
    </location>
</feature>
<feature type="repeat" description="NHL 5">
    <location>
        <begin position="1530"/>
        <end position="1573"/>
    </location>
</feature>
<feature type="repeat" description="YD 1">
    <location>
        <begin position="1583"/>
        <end position="1602"/>
    </location>
</feature>
<feature type="repeat" description="YD 2">
    <location>
        <begin position="1619"/>
        <end position="1639"/>
    </location>
</feature>
<feature type="repeat" description="YD 3">
    <location>
        <begin position="1682"/>
        <end position="1701"/>
    </location>
</feature>
<feature type="repeat" description="YD 4">
    <location>
        <begin position="1702"/>
        <end position="1724"/>
    </location>
</feature>
<feature type="repeat" description="YD 5">
    <location>
        <begin position="1895"/>
        <end position="1914"/>
    </location>
</feature>
<feature type="repeat" description="YD 6">
    <location>
        <begin position="1936"/>
        <end position="1954"/>
    </location>
</feature>
<feature type="repeat" description="YD 7">
    <location>
        <begin position="1955"/>
        <end position="1975"/>
    </location>
</feature>
<feature type="repeat" description="YD 8">
    <location>
        <begin position="1982"/>
        <end position="1999"/>
    </location>
</feature>
<feature type="repeat" description="YD 9">
    <location>
        <begin position="2000"/>
        <end position="2021"/>
    </location>
</feature>
<feature type="repeat" description="YD 10">
    <location>
        <begin position="2022"/>
        <end position="2039"/>
    </location>
</feature>
<feature type="repeat" description="YD 11">
    <location>
        <begin position="2042"/>
        <end position="2062"/>
    </location>
</feature>
<feature type="repeat" description="YD 12">
    <location>
        <begin position="2065"/>
        <end position="2085"/>
    </location>
</feature>
<feature type="repeat" description="YD 13">
    <location>
        <begin position="2093"/>
        <end position="2113"/>
    </location>
</feature>
<feature type="repeat" description="YD 14">
    <location>
        <begin position="2119"/>
        <end position="2136"/>
    </location>
</feature>
<feature type="repeat" description="YD 15">
    <location>
        <begin position="2137"/>
        <end position="2163"/>
    </location>
</feature>
<feature type="repeat" description="YD 16">
    <location>
        <begin position="2165"/>
        <end position="2178"/>
    </location>
</feature>
<feature type="repeat" description="YD 17">
    <location>
        <begin position="2179"/>
        <end position="2202"/>
    </location>
</feature>
<feature type="repeat" description="YD 18">
    <location>
        <begin position="2205"/>
        <end position="2225"/>
    </location>
</feature>
<feature type="repeat" description="YD 19">
    <location>
        <begin position="2226"/>
        <end position="2246"/>
    </location>
</feature>
<feature type="repeat" description="YD 20">
    <location>
        <begin position="2248"/>
        <end position="2268"/>
    </location>
</feature>
<feature type="repeat" description="YD 21">
    <location>
        <begin position="2280"/>
        <end position="2300"/>
    </location>
</feature>
<feature type="repeat" description="YD 22">
    <location>
        <begin position="2302"/>
        <end position="2322"/>
    </location>
</feature>
<feature type="repeat" description="YD 23">
    <location>
        <begin position="2348"/>
        <end position="2389"/>
    </location>
</feature>
<feature type="region of interest" description="Disordered" evidence="9">
    <location>
        <begin position="111"/>
        <end position="271"/>
    </location>
</feature>
<feature type="compositionally biased region" description="Polar residues" evidence="9">
    <location>
        <begin position="141"/>
        <end position="155"/>
    </location>
</feature>
<feature type="compositionally biased region" description="Basic and acidic residues" evidence="9">
    <location>
        <begin position="159"/>
        <end position="168"/>
    </location>
</feature>
<feature type="compositionally biased region" description="Low complexity" evidence="9">
    <location>
        <begin position="174"/>
        <end position="188"/>
    </location>
</feature>
<feature type="compositionally biased region" description="Polar residues" evidence="9">
    <location>
        <begin position="202"/>
        <end position="211"/>
    </location>
</feature>
<feature type="compositionally biased region" description="Low complexity" evidence="9">
    <location>
        <begin position="229"/>
        <end position="240"/>
    </location>
</feature>
<feature type="site" description="Cleavage" evidence="1">
    <location>
        <begin position="528"/>
        <end position="529"/>
    </location>
</feature>
<feature type="modified residue" description="Phosphoserine" evidence="5">
    <location>
        <position position="90"/>
    </location>
</feature>
<feature type="modified residue" description="Phosphoserine" evidence="2">
    <location>
        <position position="124"/>
    </location>
</feature>
<feature type="modified residue" description="Phosphothreonine" evidence="14">
    <location>
        <position position="155"/>
    </location>
</feature>
<feature type="modified residue" description="Phosphoserine" evidence="14">
    <location>
        <position position="157"/>
    </location>
</feature>
<feature type="glycosylation site" description="N-linked (GlcNAc...) asparagine" evidence="6">
    <location>
        <position position="443"/>
    </location>
</feature>
<feature type="glycosylation site" description="N-linked (GlcNAc...) asparagine" evidence="6">
    <location>
        <position position="482"/>
    </location>
</feature>
<feature type="glycosylation site" description="N-linked (GlcNAc...) asparagine" evidence="6">
    <location>
        <position position="925"/>
    </location>
</feature>
<feature type="glycosylation site" description="N-linked (GlcNAc...) asparagine" evidence="6">
    <location>
        <position position="948"/>
    </location>
</feature>
<feature type="glycosylation site" description="N-linked (GlcNAc...) asparagine" evidence="6">
    <location>
        <position position="1267"/>
    </location>
</feature>
<feature type="glycosylation site" description="N-linked (GlcNAc...) asparagine" evidence="6">
    <location>
        <position position="1616"/>
    </location>
</feature>
<feature type="glycosylation site" description="N-linked (GlcNAc...) asparagine" evidence="6">
    <location>
        <position position="1712"/>
    </location>
</feature>
<feature type="glycosylation site" description="N-linked (GlcNAc...) asparagine" evidence="6">
    <location>
        <position position="1749"/>
    </location>
</feature>
<feature type="glycosylation site" description="N-linked (GlcNAc...) asparagine" evidence="6">
    <location>
        <position position="1773"/>
    </location>
</feature>
<feature type="glycosylation site" description="N-linked (GlcNAc...) asparagine" evidence="6">
    <location>
        <position position="1807"/>
    </location>
</feature>
<feature type="glycosylation site" description="N-linked (GlcNAc...) asparagine" evidence="6">
    <location>
        <position position="1892"/>
    </location>
</feature>
<feature type="glycosylation site" description="N-linked (GlcNAc...) asparagine" evidence="6">
    <location>
        <position position="1993"/>
    </location>
</feature>
<feature type="glycosylation site" description="N-linked (GlcNAc...) asparagine" evidence="6">
    <location>
        <position position="2197"/>
    </location>
</feature>
<feature type="glycosylation site" description="N-linked (GlcNAc...) asparagine" evidence="6">
    <location>
        <position position="2337"/>
    </location>
</feature>
<feature type="glycosylation site" description="N-linked (GlcNAc...) asparagine" evidence="6">
    <location>
        <position position="2648"/>
    </location>
</feature>
<feature type="disulfide bond" evidence="7">
    <location>
        <begin position="576"/>
        <end position="586"/>
    </location>
</feature>
<feature type="disulfide bond" evidence="7">
    <location>
        <begin position="580"/>
        <end position="591"/>
    </location>
</feature>
<feature type="disulfide bond" evidence="7">
    <location>
        <begin position="593"/>
        <end position="602"/>
    </location>
</feature>
<feature type="disulfide bond" evidence="7">
    <location>
        <begin position="611"/>
        <end position="622"/>
    </location>
</feature>
<feature type="disulfide bond" evidence="7">
    <location>
        <begin position="624"/>
        <end position="633"/>
    </location>
</feature>
<feature type="disulfide bond" evidence="7">
    <location>
        <begin position="640"/>
        <end position="651"/>
    </location>
</feature>
<feature type="disulfide bond" evidence="7">
    <location>
        <begin position="645"/>
        <end position="656"/>
    </location>
</feature>
<feature type="disulfide bond" evidence="7">
    <location>
        <begin position="658"/>
        <end position="667"/>
    </location>
</feature>
<feature type="disulfide bond" evidence="7">
    <location>
        <begin position="672"/>
        <end position="683"/>
    </location>
</feature>
<feature type="disulfide bond" evidence="7">
    <location>
        <begin position="677"/>
        <end position="688"/>
    </location>
</feature>
<feature type="disulfide bond" evidence="7">
    <location>
        <begin position="690"/>
        <end position="699"/>
    </location>
</feature>
<feature type="disulfide bond" evidence="7">
    <location>
        <begin position="710"/>
        <end position="723"/>
    </location>
</feature>
<feature type="disulfide bond" evidence="7">
    <location>
        <begin position="725"/>
        <end position="734"/>
    </location>
</feature>
<feature type="disulfide bond" evidence="7">
    <location>
        <begin position="739"/>
        <end position="749"/>
    </location>
</feature>
<feature type="disulfide bond" evidence="7">
    <location>
        <begin position="743"/>
        <end position="754"/>
    </location>
</feature>
<feature type="disulfide bond" evidence="7">
    <location>
        <begin position="756"/>
        <end position="765"/>
    </location>
</feature>
<feature type="disulfide bond" evidence="7">
    <location>
        <begin position="770"/>
        <end position="780"/>
    </location>
</feature>
<feature type="disulfide bond" evidence="7">
    <location>
        <begin position="774"/>
        <end position="785"/>
    </location>
</feature>
<feature type="disulfide bond" evidence="7">
    <location>
        <begin position="787"/>
        <end position="796"/>
    </location>
</feature>
<feature type="disulfide bond" evidence="7">
    <location>
        <begin position="810"/>
        <end position="820"/>
    </location>
</feature>
<feature type="disulfide bond" evidence="7">
    <location>
        <begin position="814"/>
        <end position="829"/>
    </location>
</feature>
<feature type="disulfide bond" evidence="7">
    <location>
        <begin position="831"/>
        <end position="840"/>
    </location>
</feature>
<feature type="splice variant" id="VSP_021395" description="In isoform 3." evidence="12">
    <location>
        <begin position="605"/>
        <end position="669"/>
    </location>
</feature>
<feature type="splice variant" id="VSP_021397" description="In isoform 4." evidence="12">
    <location>
        <begin position="737"/>
        <end position="807"/>
    </location>
</feature>
<feature type="splice variant" id="VSP_021396" description="In isoform 2." evidence="12">
    <location>
        <begin position="799"/>
        <end position="807"/>
    </location>
</feature>
<gene>
    <name type="primary">Tenm2</name>
    <name type="synonym">Odz2</name>
    <name type="synonym">Tnm2</name>
</gene>
<protein>
    <recommendedName>
        <fullName>Teneurin-2</fullName>
        <shortName>Ten-2</shortName>
    </recommendedName>
    <alternativeName>
        <fullName>Neurestin</fullName>
    </alternativeName>
    <alternativeName>
        <fullName>Protein Odd Oz/ten-m homolog 2</fullName>
    </alternativeName>
    <alternativeName>
        <fullName>Tenascin-M2</fullName>
        <shortName>Ten-m2</shortName>
    </alternativeName>
    <alternativeName>
        <fullName>Teneurin transmembrane protein 2</fullName>
    </alternativeName>
    <component>
        <recommendedName>
            <fullName>Ten-2, soluble form</fullName>
        </recommendedName>
    </component>
    <component>
        <recommendedName>
            <fullName>Ten-2 intracellular domain</fullName>
            <shortName>Ten-2 ICD</shortName>
        </recommendedName>
    </component>
</protein>
<name>TEN2_RAT</name>
<evidence type="ECO:0000250" key="1"/>
<evidence type="ECO:0000250" key="2">
    <source>
        <dbReference type="UniProtKB" id="Q3UHK6"/>
    </source>
</evidence>
<evidence type="ECO:0000250" key="3">
    <source>
        <dbReference type="UniProtKB" id="Q9DER5"/>
    </source>
</evidence>
<evidence type="ECO:0000250" key="4">
    <source>
        <dbReference type="UniProtKB" id="Q9NT68"/>
    </source>
</evidence>
<evidence type="ECO:0000250" key="5">
    <source>
        <dbReference type="UniProtKB" id="Q9WTS5"/>
    </source>
</evidence>
<evidence type="ECO:0000255" key="6"/>
<evidence type="ECO:0000255" key="7">
    <source>
        <dbReference type="PROSITE-ProRule" id="PRU00076"/>
    </source>
</evidence>
<evidence type="ECO:0000255" key="8">
    <source>
        <dbReference type="PROSITE-ProRule" id="PRU00694"/>
    </source>
</evidence>
<evidence type="ECO:0000256" key="9">
    <source>
        <dbReference type="SAM" id="MobiDB-lite"/>
    </source>
</evidence>
<evidence type="ECO:0000269" key="10">
    <source>
    </source>
</evidence>
<evidence type="ECO:0000269" key="11">
    <source>
    </source>
</evidence>
<evidence type="ECO:0000303" key="12">
    <source>
    </source>
</evidence>
<evidence type="ECO:0000305" key="13"/>
<evidence type="ECO:0007744" key="14">
    <source>
    </source>
</evidence>
<organism>
    <name type="scientific">Rattus norvegicus</name>
    <name type="common">Rat</name>
    <dbReference type="NCBI Taxonomy" id="10116"/>
    <lineage>
        <taxon>Eukaryota</taxon>
        <taxon>Metazoa</taxon>
        <taxon>Chordata</taxon>
        <taxon>Craniata</taxon>
        <taxon>Vertebrata</taxon>
        <taxon>Euteleostomi</taxon>
        <taxon>Mammalia</taxon>
        <taxon>Eutheria</taxon>
        <taxon>Euarchontoglires</taxon>
        <taxon>Glires</taxon>
        <taxon>Rodentia</taxon>
        <taxon>Myomorpha</taxon>
        <taxon>Muroidea</taxon>
        <taxon>Muridae</taxon>
        <taxon>Murinae</taxon>
        <taxon>Rattus</taxon>
    </lineage>
</organism>
<dbReference type="EMBL" id="AF086607">
    <property type="protein sequence ID" value="AAD47383.1"/>
    <property type="molecule type" value="mRNA"/>
</dbReference>
<dbReference type="EMBL" id="AF086608">
    <property type="protein sequence ID" value="AAD47384.1"/>
    <property type="molecule type" value="mRNA"/>
</dbReference>
<dbReference type="EMBL" id="AF086609">
    <property type="protein sequence ID" value="AAD47385.1"/>
    <property type="molecule type" value="mRNA"/>
</dbReference>
<dbReference type="EMBL" id="AF086610">
    <property type="protein sequence ID" value="AAD47386.1"/>
    <property type="molecule type" value="mRNA"/>
</dbReference>
<dbReference type="RefSeq" id="NP_064473.1">
    <molecule id="Q9R1K2-2"/>
    <property type="nucleotide sequence ID" value="NM_020088.1"/>
</dbReference>
<dbReference type="SMR" id="Q9R1K2"/>
<dbReference type="FunCoup" id="Q9R1K2">
    <property type="interactions" value="608"/>
</dbReference>
<dbReference type="STRING" id="10116.ENSRNOP00000011922"/>
<dbReference type="GlyCosmos" id="Q9R1K2">
    <property type="glycosylation" value="15 sites, 2 glycans"/>
</dbReference>
<dbReference type="GlyGen" id="Q9R1K2">
    <property type="glycosylation" value="16 sites, 2 N-linked glycans (1 site)"/>
</dbReference>
<dbReference type="iPTMnet" id="Q9R1K2"/>
<dbReference type="PhosphoSitePlus" id="Q9R1K2"/>
<dbReference type="SwissPalm" id="Q9R1K2"/>
<dbReference type="PaxDb" id="10116-ENSRNOP00000011922"/>
<dbReference type="GeneID" id="117242"/>
<dbReference type="KEGG" id="rno:117242"/>
<dbReference type="UCSC" id="RGD:727907">
    <molecule id="Q9R1K2-1"/>
    <property type="organism name" value="rat"/>
</dbReference>
<dbReference type="AGR" id="RGD:727907"/>
<dbReference type="CTD" id="57451"/>
<dbReference type="RGD" id="727907">
    <property type="gene designation" value="Tenm2"/>
</dbReference>
<dbReference type="eggNOG" id="KOG1225">
    <property type="taxonomic scope" value="Eukaryota"/>
</dbReference>
<dbReference type="eggNOG" id="KOG4659">
    <property type="taxonomic scope" value="Eukaryota"/>
</dbReference>
<dbReference type="InParanoid" id="Q9R1K2"/>
<dbReference type="PhylomeDB" id="Q9R1K2"/>
<dbReference type="PRO" id="PR:Q9R1K2"/>
<dbReference type="Proteomes" id="UP000002494">
    <property type="component" value="Unplaced"/>
</dbReference>
<dbReference type="GO" id="GO:0030054">
    <property type="term" value="C:cell junction"/>
    <property type="evidence" value="ECO:0000250"/>
    <property type="project" value="UniProtKB"/>
</dbReference>
<dbReference type="GO" id="GO:0005911">
    <property type="term" value="C:cell-cell junction"/>
    <property type="evidence" value="ECO:0000250"/>
    <property type="project" value="UniProtKB"/>
</dbReference>
<dbReference type="GO" id="GO:0030425">
    <property type="term" value="C:dendrite"/>
    <property type="evidence" value="ECO:0000250"/>
    <property type="project" value="UniProtKB"/>
</dbReference>
<dbReference type="GO" id="GO:0043197">
    <property type="term" value="C:dendritic spine"/>
    <property type="evidence" value="ECO:0000314"/>
    <property type="project" value="UniProtKB"/>
</dbReference>
<dbReference type="GO" id="GO:0005783">
    <property type="term" value="C:endoplasmic reticulum"/>
    <property type="evidence" value="ECO:0000250"/>
    <property type="project" value="UniProtKB"/>
</dbReference>
<dbReference type="GO" id="GO:0098890">
    <property type="term" value="C:extrinsic component of postsynaptic membrane"/>
    <property type="evidence" value="ECO:0000314"/>
    <property type="project" value="SynGO"/>
</dbReference>
<dbReference type="GO" id="GO:0030175">
    <property type="term" value="C:filopodium"/>
    <property type="evidence" value="ECO:0000250"/>
    <property type="project" value="UniProtKB"/>
</dbReference>
<dbReference type="GO" id="GO:0098978">
    <property type="term" value="C:glutamatergic synapse"/>
    <property type="evidence" value="ECO:0000314"/>
    <property type="project" value="SynGO"/>
</dbReference>
<dbReference type="GO" id="GO:0005794">
    <property type="term" value="C:Golgi apparatus"/>
    <property type="evidence" value="ECO:0000250"/>
    <property type="project" value="UniProtKB"/>
</dbReference>
<dbReference type="GO" id="GO:0030426">
    <property type="term" value="C:growth cone"/>
    <property type="evidence" value="ECO:0000250"/>
    <property type="project" value="UniProtKB"/>
</dbReference>
<dbReference type="GO" id="GO:0043005">
    <property type="term" value="C:neuron projection"/>
    <property type="evidence" value="ECO:0000314"/>
    <property type="project" value="UniProtKB"/>
</dbReference>
<dbReference type="GO" id="GO:0005634">
    <property type="term" value="C:nucleus"/>
    <property type="evidence" value="ECO:0000250"/>
    <property type="project" value="UniProtKB"/>
</dbReference>
<dbReference type="GO" id="GO:0005886">
    <property type="term" value="C:plasma membrane"/>
    <property type="evidence" value="ECO:0000314"/>
    <property type="project" value="UniProtKB"/>
</dbReference>
<dbReference type="GO" id="GO:0016605">
    <property type="term" value="C:PML body"/>
    <property type="evidence" value="ECO:0000250"/>
    <property type="project" value="UniProtKB"/>
</dbReference>
<dbReference type="GO" id="GO:0045211">
    <property type="term" value="C:postsynaptic membrane"/>
    <property type="evidence" value="ECO:0000314"/>
    <property type="project" value="UniProtKB"/>
</dbReference>
<dbReference type="GO" id="GO:0045202">
    <property type="term" value="C:synapse"/>
    <property type="evidence" value="ECO:0000314"/>
    <property type="project" value="UniProtKB"/>
</dbReference>
<dbReference type="GO" id="GO:0005509">
    <property type="term" value="F:calcium ion binding"/>
    <property type="evidence" value="ECO:0007669"/>
    <property type="project" value="InterPro"/>
</dbReference>
<dbReference type="GO" id="GO:0050839">
    <property type="term" value="F:cell adhesion molecule binding"/>
    <property type="evidence" value="ECO:0000314"/>
    <property type="project" value="UniProtKB"/>
</dbReference>
<dbReference type="GO" id="GO:0042802">
    <property type="term" value="F:identical protein binding"/>
    <property type="evidence" value="ECO:0000266"/>
    <property type="project" value="RGD"/>
</dbReference>
<dbReference type="GO" id="GO:0046982">
    <property type="term" value="F:protein heterodimerization activity"/>
    <property type="evidence" value="ECO:0000250"/>
    <property type="project" value="UniProtKB"/>
</dbReference>
<dbReference type="GO" id="GO:0042803">
    <property type="term" value="F:protein homodimerization activity"/>
    <property type="evidence" value="ECO:0000250"/>
    <property type="project" value="UniProtKB"/>
</dbReference>
<dbReference type="GO" id="GO:0005102">
    <property type="term" value="F:signaling receptor binding"/>
    <property type="evidence" value="ECO:0000314"/>
    <property type="project" value="UniProtKB"/>
</dbReference>
<dbReference type="GO" id="GO:0098609">
    <property type="term" value="P:cell-cell adhesion"/>
    <property type="evidence" value="ECO:0000250"/>
    <property type="project" value="UniProtKB"/>
</dbReference>
<dbReference type="GO" id="GO:0000122">
    <property type="term" value="P:negative regulation of transcription by RNA polymerase II"/>
    <property type="evidence" value="ECO:0000250"/>
    <property type="project" value="UniProtKB"/>
</dbReference>
<dbReference type="GO" id="GO:0048666">
    <property type="term" value="P:neuron development"/>
    <property type="evidence" value="ECO:0000318"/>
    <property type="project" value="GO_Central"/>
</dbReference>
<dbReference type="GO" id="GO:0051491">
    <property type="term" value="P:positive regulation of filopodium assembly"/>
    <property type="evidence" value="ECO:0000250"/>
    <property type="project" value="UniProtKB"/>
</dbReference>
<dbReference type="GO" id="GO:0098942">
    <property type="term" value="P:retrograde trans-synaptic signaling by trans-synaptic protein complex"/>
    <property type="evidence" value="ECO:0000266"/>
    <property type="project" value="RGD"/>
</dbReference>
<dbReference type="GO" id="GO:0007165">
    <property type="term" value="P:signal transduction"/>
    <property type="evidence" value="ECO:0007669"/>
    <property type="project" value="InterPro"/>
</dbReference>
<dbReference type="CDD" id="cd00054">
    <property type="entry name" value="EGF_CA"/>
    <property type="match status" value="3"/>
</dbReference>
<dbReference type="FunFam" id="2.60.120.260:FF:000176">
    <property type="entry name" value="Si:ch211-12m10.1"/>
    <property type="match status" value="1"/>
</dbReference>
<dbReference type="FunFam" id="2.10.25.10:FF:000016">
    <property type="entry name" value="Teneurin transmembrane protein 2"/>
    <property type="match status" value="1"/>
</dbReference>
<dbReference type="FunFam" id="2.10.25.10:FF:000021">
    <property type="entry name" value="Teneurin transmembrane protein 2"/>
    <property type="match status" value="1"/>
</dbReference>
<dbReference type="FunFam" id="2.10.25.10:FF:000026">
    <property type="entry name" value="Teneurin transmembrane protein 2"/>
    <property type="match status" value="1"/>
</dbReference>
<dbReference type="FunFam" id="2.10.25.10:FF:000474">
    <property type="entry name" value="Teneurin transmembrane protein 2"/>
    <property type="match status" value="1"/>
</dbReference>
<dbReference type="FunFam" id="2.120.10.30:FF:000003">
    <property type="entry name" value="Teneurin transmembrane protein 2"/>
    <property type="match status" value="1"/>
</dbReference>
<dbReference type="FunFam" id="2.10.25.10:FF:000013">
    <property type="entry name" value="Teneurin transmembrane protein 4"/>
    <property type="match status" value="1"/>
</dbReference>
<dbReference type="FunFam" id="2.120.10.30:FF:000061">
    <property type="entry name" value="teneurin-2 isoform X1"/>
    <property type="match status" value="1"/>
</dbReference>
<dbReference type="Gene3D" id="2.10.25.10">
    <property type="entry name" value="Laminin"/>
    <property type="match status" value="7"/>
</dbReference>
<dbReference type="Gene3D" id="2.180.10.10">
    <property type="entry name" value="RHS repeat-associated core"/>
    <property type="match status" value="1"/>
</dbReference>
<dbReference type="Gene3D" id="2.120.10.30">
    <property type="entry name" value="TolB, C-terminal domain"/>
    <property type="match status" value="2"/>
</dbReference>
<dbReference type="InterPro" id="IPR011042">
    <property type="entry name" value="6-blade_b-propeller_TolB-like"/>
</dbReference>
<dbReference type="InterPro" id="IPR008969">
    <property type="entry name" value="CarboxyPept-like_regulatory"/>
</dbReference>
<dbReference type="InterPro" id="IPR001881">
    <property type="entry name" value="EGF-like_Ca-bd_dom"/>
</dbReference>
<dbReference type="InterPro" id="IPR000742">
    <property type="entry name" value="EGF-like_dom"/>
</dbReference>
<dbReference type="InterPro" id="IPR022385">
    <property type="entry name" value="Rhs_assc_core"/>
</dbReference>
<dbReference type="InterPro" id="IPR009471">
    <property type="entry name" value="Ten_N"/>
</dbReference>
<dbReference type="InterPro" id="IPR056822">
    <property type="entry name" value="TEN_NHL"/>
</dbReference>
<dbReference type="InterPro" id="IPR056820">
    <property type="entry name" value="TEN_TTR-like"/>
</dbReference>
<dbReference type="InterPro" id="IPR056823">
    <property type="entry name" value="TEN_YD-shell"/>
</dbReference>
<dbReference type="InterPro" id="IPR051216">
    <property type="entry name" value="Teneurin"/>
</dbReference>
<dbReference type="InterPro" id="IPR028916">
    <property type="entry name" value="Tox-GHH_dom"/>
</dbReference>
<dbReference type="InterPro" id="IPR006530">
    <property type="entry name" value="YD"/>
</dbReference>
<dbReference type="NCBIfam" id="TIGR03696">
    <property type="entry name" value="Rhs_assc_core"/>
    <property type="match status" value="1"/>
</dbReference>
<dbReference type="NCBIfam" id="TIGR01643">
    <property type="entry name" value="YD_repeat_2x"/>
    <property type="match status" value="1"/>
</dbReference>
<dbReference type="PANTHER" id="PTHR11219">
    <property type="entry name" value="TENEURIN AND N-ACETYLGLUCOSAMINE-1-PHOSPHODIESTER ALPHA-N-ACETYLGLUCOSAMINIDASE"/>
    <property type="match status" value="1"/>
</dbReference>
<dbReference type="PANTHER" id="PTHR11219:SF8">
    <property type="entry name" value="TENEURIN-2"/>
    <property type="match status" value="1"/>
</dbReference>
<dbReference type="Pfam" id="PF25024">
    <property type="entry name" value="EGF_TEN"/>
    <property type="match status" value="1"/>
</dbReference>
<dbReference type="Pfam" id="PF24329">
    <property type="entry name" value="FN-plug_TEN1-4"/>
    <property type="match status" value="1"/>
</dbReference>
<dbReference type="Pfam" id="PF23093">
    <property type="entry name" value="GBD_Tenm3"/>
    <property type="match status" value="1"/>
</dbReference>
<dbReference type="Pfam" id="PF06484">
    <property type="entry name" value="Ten_N"/>
    <property type="match status" value="1"/>
</dbReference>
<dbReference type="Pfam" id="PF25021">
    <property type="entry name" value="TEN_NHL"/>
    <property type="match status" value="1"/>
</dbReference>
<dbReference type="Pfam" id="PF25023">
    <property type="entry name" value="TEN_YD-shell"/>
    <property type="match status" value="1"/>
</dbReference>
<dbReference type="Pfam" id="PF23538">
    <property type="entry name" value="Teneurin_ABD"/>
    <property type="match status" value="1"/>
</dbReference>
<dbReference type="Pfam" id="PF15636">
    <property type="entry name" value="Tox-GHH"/>
    <property type="match status" value="1"/>
</dbReference>
<dbReference type="Pfam" id="PF25020">
    <property type="entry name" value="TTR_TEN1-4"/>
    <property type="match status" value="1"/>
</dbReference>
<dbReference type="SMART" id="SM00181">
    <property type="entry name" value="EGF"/>
    <property type="match status" value="8"/>
</dbReference>
<dbReference type="SMART" id="SM00179">
    <property type="entry name" value="EGF_CA"/>
    <property type="match status" value="2"/>
</dbReference>
<dbReference type="SUPFAM" id="SSF49464">
    <property type="entry name" value="Carboxypeptidase regulatory domain-like"/>
    <property type="match status" value="1"/>
</dbReference>
<dbReference type="SUPFAM" id="SSF82171">
    <property type="entry name" value="DPP6 N-terminal domain-like"/>
    <property type="match status" value="1"/>
</dbReference>
<dbReference type="SUPFAM" id="SSF101898">
    <property type="entry name" value="NHL repeat"/>
    <property type="match status" value="1"/>
</dbReference>
<dbReference type="PROSITE" id="PS00022">
    <property type="entry name" value="EGF_1"/>
    <property type="match status" value="8"/>
</dbReference>
<dbReference type="PROSITE" id="PS01186">
    <property type="entry name" value="EGF_2"/>
    <property type="match status" value="7"/>
</dbReference>
<dbReference type="PROSITE" id="PS50026">
    <property type="entry name" value="EGF_3"/>
    <property type="match status" value="5"/>
</dbReference>
<dbReference type="PROSITE" id="PS51361">
    <property type="entry name" value="TENEURIN_N"/>
    <property type="match status" value="1"/>
</dbReference>
<keyword id="KW-0025">Alternative splicing</keyword>
<keyword id="KW-0130">Cell adhesion</keyword>
<keyword id="KW-1003">Cell membrane</keyword>
<keyword id="KW-0966">Cell projection</keyword>
<keyword id="KW-0165">Cleavage on pair of basic residues</keyword>
<keyword id="KW-1015">Disulfide bond</keyword>
<keyword id="KW-0245">EGF-like domain</keyword>
<keyword id="KW-0256">Endoplasmic reticulum</keyword>
<keyword id="KW-0325">Glycoprotein</keyword>
<keyword id="KW-0333">Golgi apparatus</keyword>
<keyword id="KW-0472">Membrane</keyword>
<keyword id="KW-0539">Nucleus</keyword>
<keyword id="KW-0597">Phosphoprotein</keyword>
<keyword id="KW-0628">Postsynaptic cell membrane</keyword>
<keyword id="KW-1185">Reference proteome</keyword>
<keyword id="KW-0677">Repeat</keyword>
<keyword id="KW-0678">Repressor</keyword>
<keyword id="KW-0770">Synapse</keyword>
<keyword id="KW-0804">Transcription</keyword>
<keyword id="KW-0805">Transcription regulation</keyword>
<keyword id="KW-0812">Transmembrane</keyword>
<keyword id="KW-1133">Transmembrane helix</keyword>
<accession>Q9R1K2</accession>
<accession>Q9R1J9</accession>
<accession>Q9R1K0</accession>
<accession>Q9R1K1</accession>